<proteinExistence type="inferred from homology"/>
<gene>
    <name evidence="1" type="primary">mraY</name>
    <name type="ordered locus">BBta_6177</name>
</gene>
<reference key="1">
    <citation type="journal article" date="2007" name="Science">
        <title>Legumes symbioses: absence of nod genes in photosynthetic bradyrhizobia.</title>
        <authorList>
            <person name="Giraud E."/>
            <person name="Moulin L."/>
            <person name="Vallenet D."/>
            <person name="Barbe V."/>
            <person name="Cytryn E."/>
            <person name="Avarre J.-C."/>
            <person name="Jaubert M."/>
            <person name="Simon D."/>
            <person name="Cartieaux F."/>
            <person name="Prin Y."/>
            <person name="Bena G."/>
            <person name="Hannibal L."/>
            <person name="Fardoux J."/>
            <person name="Kojadinovic M."/>
            <person name="Vuillet L."/>
            <person name="Lajus A."/>
            <person name="Cruveiller S."/>
            <person name="Rouy Z."/>
            <person name="Mangenot S."/>
            <person name="Segurens B."/>
            <person name="Dossat C."/>
            <person name="Franck W.L."/>
            <person name="Chang W.-S."/>
            <person name="Saunders E."/>
            <person name="Bruce D."/>
            <person name="Richardson P."/>
            <person name="Normand P."/>
            <person name="Dreyfus B."/>
            <person name="Pignol D."/>
            <person name="Stacey G."/>
            <person name="Emerich D."/>
            <person name="Vermeglio A."/>
            <person name="Medigue C."/>
            <person name="Sadowsky M."/>
        </authorList>
    </citation>
    <scope>NUCLEOTIDE SEQUENCE [LARGE SCALE GENOMIC DNA]</scope>
    <source>
        <strain>BTAi1 / ATCC BAA-1182</strain>
    </source>
</reference>
<evidence type="ECO:0000255" key="1">
    <source>
        <dbReference type="HAMAP-Rule" id="MF_00038"/>
    </source>
</evidence>
<feature type="chain" id="PRO_1000002941" description="Phospho-N-acetylmuramoyl-pentapeptide-transferase">
    <location>
        <begin position="1"/>
        <end position="368"/>
    </location>
</feature>
<feature type="transmembrane region" description="Helical" evidence="1">
    <location>
        <begin position="34"/>
        <end position="54"/>
    </location>
</feature>
<feature type="transmembrane region" description="Helical" evidence="1">
    <location>
        <begin position="79"/>
        <end position="99"/>
    </location>
</feature>
<feature type="transmembrane region" description="Helical" evidence="1">
    <location>
        <begin position="102"/>
        <end position="122"/>
    </location>
</feature>
<feature type="transmembrane region" description="Helical" evidence="1">
    <location>
        <begin position="140"/>
        <end position="160"/>
    </location>
</feature>
<feature type="transmembrane region" description="Helical" evidence="1">
    <location>
        <begin position="176"/>
        <end position="196"/>
    </location>
</feature>
<feature type="transmembrane region" description="Helical" evidence="1">
    <location>
        <begin position="207"/>
        <end position="227"/>
    </location>
</feature>
<feature type="transmembrane region" description="Helical" evidence="1">
    <location>
        <begin position="247"/>
        <end position="267"/>
    </location>
</feature>
<feature type="transmembrane region" description="Helical" evidence="1">
    <location>
        <begin position="271"/>
        <end position="291"/>
    </location>
</feature>
<feature type="transmembrane region" description="Helical" evidence="1">
    <location>
        <begin position="296"/>
        <end position="316"/>
    </location>
</feature>
<feature type="transmembrane region" description="Helical" evidence="1">
    <location>
        <begin position="345"/>
        <end position="365"/>
    </location>
</feature>
<name>MRAY_BRASB</name>
<organism>
    <name type="scientific">Bradyrhizobium sp. (strain BTAi1 / ATCC BAA-1182)</name>
    <dbReference type="NCBI Taxonomy" id="288000"/>
    <lineage>
        <taxon>Bacteria</taxon>
        <taxon>Pseudomonadati</taxon>
        <taxon>Pseudomonadota</taxon>
        <taxon>Alphaproteobacteria</taxon>
        <taxon>Hyphomicrobiales</taxon>
        <taxon>Nitrobacteraceae</taxon>
        <taxon>Bradyrhizobium</taxon>
    </lineage>
</organism>
<keyword id="KW-0131">Cell cycle</keyword>
<keyword id="KW-0132">Cell division</keyword>
<keyword id="KW-0997">Cell inner membrane</keyword>
<keyword id="KW-1003">Cell membrane</keyword>
<keyword id="KW-0133">Cell shape</keyword>
<keyword id="KW-0961">Cell wall biogenesis/degradation</keyword>
<keyword id="KW-0460">Magnesium</keyword>
<keyword id="KW-0472">Membrane</keyword>
<keyword id="KW-0479">Metal-binding</keyword>
<keyword id="KW-0573">Peptidoglycan synthesis</keyword>
<keyword id="KW-1185">Reference proteome</keyword>
<keyword id="KW-0808">Transferase</keyword>
<keyword id="KW-0812">Transmembrane</keyword>
<keyword id="KW-1133">Transmembrane helix</keyword>
<comment type="function">
    <text evidence="1">Catalyzes the initial step of the lipid cycle reactions in the biosynthesis of the cell wall peptidoglycan: transfers peptidoglycan precursor phospho-MurNAc-pentapeptide from UDP-MurNAc-pentapeptide onto the lipid carrier undecaprenyl phosphate, yielding undecaprenyl-pyrophosphoryl-MurNAc-pentapeptide, known as lipid I.</text>
</comment>
<comment type="catalytic activity">
    <reaction evidence="1">
        <text>UDP-N-acetyl-alpha-D-muramoyl-L-alanyl-gamma-D-glutamyl-meso-2,6-diaminopimeloyl-D-alanyl-D-alanine + di-trans,octa-cis-undecaprenyl phosphate = di-trans,octa-cis-undecaprenyl diphospho-N-acetyl-alpha-D-muramoyl-L-alanyl-D-glutamyl-meso-2,6-diaminopimeloyl-D-alanyl-D-alanine + UMP</text>
        <dbReference type="Rhea" id="RHEA:28386"/>
        <dbReference type="ChEBI" id="CHEBI:57865"/>
        <dbReference type="ChEBI" id="CHEBI:60392"/>
        <dbReference type="ChEBI" id="CHEBI:61386"/>
        <dbReference type="ChEBI" id="CHEBI:61387"/>
        <dbReference type="EC" id="2.7.8.13"/>
    </reaction>
</comment>
<comment type="cofactor">
    <cofactor evidence="1">
        <name>Mg(2+)</name>
        <dbReference type="ChEBI" id="CHEBI:18420"/>
    </cofactor>
</comment>
<comment type="pathway">
    <text evidence="1">Cell wall biogenesis; peptidoglycan biosynthesis.</text>
</comment>
<comment type="subcellular location">
    <subcellularLocation>
        <location evidence="1">Cell inner membrane</location>
        <topology evidence="1">Multi-pass membrane protein</topology>
    </subcellularLocation>
</comment>
<comment type="similarity">
    <text evidence="1">Belongs to the glycosyltransferase 4 family. MraY subfamily.</text>
</comment>
<accession>A5EPK7</accession>
<protein>
    <recommendedName>
        <fullName evidence="1">Phospho-N-acetylmuramoyl-pentapeptide-transferase</fullName>
        <ecNumber evidence="1">2.7.8.13</ecNumber>
    </recommendedName>
    <alternativeName>
        <fullName evidence="1">UDP-MurNAc-pentapeptide phosphotransferase</fullName>
    </alternativeName>
</protein>
<sequence length="368" mass="39586">MFYWLIELTNTFPSLAMFRGLLNVFRYITFRTGGAVVTGALFVFLFGPWIIDHLRLRQGKGQPIRADGPQSHIISKKGTPTMGGLMILSGLVVSTVLWANPLNPYVWIVLAVTLGFGFVGFYDDYLKVTKQSHSGFAGRARILIEAGIALVACYALVRLGRDPSSTGLAIPFFKDLVIKFGWMYVIFGAFVIVGAGNAVNLTDGLDGLAIVPVMIASASFGLIAYLAGNAVFSDYLQIHYVAGTGELAVLCGAVLGAGLGFLWFNAPPASIFMGDTGSLALGGMLGSIAVAVKHEIVLAVIGGLFVLEAVSVIVQVASFKLTGKRIFKMAPIHHHFEQLGWTEPQIVIRFWIISVMLALVGLSTLKLR</sequence>
<dbReference type="EC" id="2.7.8.13" evidence="1"/>
<dbReference type="EMBL" id="CP000494">
    <property type="protein sequence ID" value="ABQ38101.1"/>
    <property type="molecule type" value="Genomic_DNA"/>
</dbReference>
<dbReference type="RefSeq" id="WP_012046050.1">
    <property type="nucleotide sequence ID" value="NC_009485.1"/>
</dbReference>
<dbReference type="SMR" id="A5EPK7"/>
<dbReference type="STRING" id="288000.BBta_6177"/>
<dbReference type="KEGG" id="bbt:BBta_6177"/>
<dbReference type="eggNOG" id="COG0472">
    <property type="taxonomic scope" value="Bacteria"/>
</dbReference>
<dbReference type="HOGENOM" id="CLU_023982_0_0_5"/>
<dbReference type="OrthoDB" id="9805475at2"/>
<dbReference type="UniPathway" id="UPA00219"/>
<dbReference type="Proteomes" id="UP000000246">
    <property type="component" value="Chromosome"/>
</dbReference>
<dbReference type="GO" id="GO:0005886">
    <property type="term" value="C:plasma membrane"/>
    <property type="evidence" value="ECO:0007669"/>
    <property type="project" value="UniProtKB-SubCell"/>
</dbReference>
<dbReference type="GO" id="GO:0046872">
    <property type="term" value="F:metal ion binding"/>
    <property type="evidence" value="ECO:0007669"/>
    <property type="project" value="UniProtKB-KW"/>
</dbReference>
<dbReference type="GO" id="GO:0008963">
    <property type="term" value="F:phospho-N-acetylmuramoyl-pentapeptide-transferase activity"/>
    <property type="evidence" value="ECO:0007669"/>
    <property type="project" value="UniProtKB-UniRule"/>
</dbReference>
<dbReference type="GO" id="GO:0051992">
    <property type="term" value="F:UDP-N-acetylmuramoyl-L-alanyl-D-glutamyl-meso-2,6-diaminopimelyl-D-alanyl-D-alanine:undecaprenyl-phosphate transferase activity"/>
    <property type="evidence" value="ECO:0007669"/>
    <property type="project" value="RHEA"/>
</dbReference>
<dbReference type="GO" id="GO:0051301">
    <property type="term" value="P:cell division"/>
    <property type="evidence" value="ECO:0007669"/>
    <property type="project" value="UniProtKB-KW"/>
</dbReference>
<dbReference type="GO" id="GO:0071555">
    <property type="term" value="P:cell wall organization"/>
    <property type="evidence" value="ECO:0007669"/>
    <property type="project" value="UniProtKB-KW"/>
</dbReference>
<dbReference type="GO" id="GO:0009252">
    <property type="term" value="P:peptidoglycan biosynthetic process"/>
    <property type="evidence" value="ECO:0007669"/>
    <property type="project" value="UniProtKB-UniRule"/>
</dbReference>
<dbReference type="GO" id="GO:0008360">
    <property type="term" value="P:regulation of cell shape"/>
    <property type="evidence" value="ECO:0007669"/>
    <property type="project" value="UniProtKB-KW"/>
</dbReference>
<dbReference type="CDD" id="cd06852">
    <property type="entry name" value="GT_MraY"/>
    <property type="match status" value="1"/>
</dbReference>
<dbReference type="HAMAP" id="MF_00038">
    <property type="entry name" value="MraY"/>
    <property type="match status" value="1"/>
</dbReference>
<dbReference type="InterPro" id="IPR000715">
    <property type="entry name" value="Glycosyl_transferase_4"/>
</dbReference>
<dbReference type="InterPro" id="IPR003524">
    <property type="entry name" value="PNAcMuramoyl-5peptid_Trfase"/>
</dbReference>
<dbReference type="InterPro" id="IPR018480">
    <property type="entry name" value="PNAcMuramoyl-5peptid_Trfase_CS"/>
</dbReference>
<dbReference type="NCBIfam" id="TIGR00445">
    <property type="entry name" value="mraY"/>
    <property type="match status" value="1"/>
</dbReference>
<dbReference type="PANTHER" id="PTHR22926">
    <property type="entry name" value="PHOSPHO-N-ACETYLMURAMOYL-PENTAPEPTIDE-TRANSFERASE"/>
    <property type="match status" value="1"/>
</dbReference>
<dbReference type="PANTHER" id="PTHR22926:SF5">
    <property type="entry name" value="PHOSPHO-N-ACETYLMURAMOYL-PENTAPEPTIDE-TRANSFERASE HOMOLOG"/>
    <property type="match status" value="1"/>
</dbReference>
<dbReference type="Pfam" id="PF00953">
    <property type="entry name" value="Glycos_transf_4"/>
    <property type="match status" value="1"/>
</dbReference>
<dbReference type="Pfam" id="PF10555">
    <property type="entry name" value="MraY_sig1"/>
    <property type="match status" value="1"/>
</dbReference>
<dbReference type="PROSITE" id="PS01347">
    <property type="entry name" value="MRAY_1"/>
    <property type="match status" value="1"/>
</dbReference>
<dbReference type="PROSITE" id="PS01348">
    <property type="entry name" value="MRAY_2"/>
    <property type="match status" value="1"/>
</dbReference>